<organism>
    <name type="scientific">Schizosaccharomyces pombe (strain 972 / ATCC 24843)</name>
    <name type="common">Fission yeast</name>
    <dbReference type="NCBI Taxonomy" id="284812"/>
    <lineage>
        <taxon>Eukaryota</taxon>
        <taxon>Fungi</taxon>
        <taxon>Dikarya</taxon>
        <taxon>Ascomycota</taxon>
        <taxon>Taphrinomycotina</taxon>
        <taxon>Schizosaccharomycetes</taxon>
        <taxon>Schizosaccharomycetales</taxon>
        <taxon>Schizosaccharomycetaceae</taxon>
        <taxon>Schizosaccharomyces</taxon>
    </lineage>
</organism>
<dbReference type="EMBL" id="CU329670">
    <property type="protein sequence ID" value="CAB69628.1"/>
    <property type="molecule type" value="Genomic_DNA"/>
</dbReference>
<dbReference type="PIR" id="T50278">
    <property type="entry name" value="T50278"/>
</dbReference>
<dbReference type="RefSeq" id="NP_592778.1">
    <property type="nucleotide sequence ID" value="NM_001018178.2"/>
</dbReference>
<dbReference type="SMR" id="Q9P7U3"/>
<dbReference type="BioGRID" id="279547">
    <property type="interactions" value="2"/>
</dbReference>
<dbReference type="STRING" id="284812.Q9P7U3"/>
<dbReference type="PaxDb" id="4896-SPAC977.06.1"/>
<dbReference type="EnsemblFungi" id="SPAC977.06.1">
    <property type="protein sequence ID" value="SPAC977.06.1:pep"/>
    <property type="gene ID" value="SPAC977.06"/>
</dbReference>
<dbReference type="KEGG" id="spo:2543115"/>
<dbReference type="PomBase" id="SPAC977.06"/>
<dbReference type="VEuPathDB" id="FungiDB:SPAC977.06"/>
<dbReference type="HOGENOM" id="CLU_097271_0_0_1"/>
<dbReference type="InParanoid" id="Q9P7U3"/>
<dbReference type="OMA" id="YICHWLL"/>
<dbReference type="PhylomeDB" id="Q9P7U3"/>
<dbReference type="PRO" id="PR:Q9P7U3"/>
<dbReference type="Proteomes" id="UP000002485">
    <property type="component" value="Chromosome I"/>
</dbReference>
<dbReference type="GO" id="GO:0016020">
    <property type="term" value="C:membrane"/>
    <property type="evidence" value="ECO:0007669"/>
    <property type="project" value="UniProtKB-SubCell"/>
</dbReference>
<dbReference type="InterPro" id="IPR009340">
    <property type="entry name" value="DUF999"/>
</dbReference>
<dbReference type="Pfam" id="PF06198">
    <property type="entry name" value="DUF999"/>
    <property type="match status" value="1"/>
</dbReference>
<feature type="chain" id="PRO_0000306281" description="UPF0494 membrane protein C977.06">
    <location>
        <begin position="1"/>
        <end position="189"/>
    </location>
</feature>
<feature type="transmembrane region" description="Helical" evidence="1">
    <location>
        <begin position="78"/>
        <end position="98"/>
    </location>
</feature>
<feature type="transmembrane region" description="Helical" evidence="1">
    <location>
        <begin position="120"/>
        <end position="140"/>
    </location>
</feature>
<feature type="transmembrane region" description="Helical" evidence="1">
    <location>
        <begin position="148"/>
        <end position="168"/>
    </location>
</feature>
<reference evidence="3" key="1">
    <citation type="journal article" date="2002" name="Nature">
        <title>The genome sequence of Schizosaccharomyces pombe.</title>
        <authorList>
            <person name="Wood V."/>
            <person name="Gwilliam R."/>
            <person name="Rajandream M.A."/>
            <person name="Lyne M.H."/>
            <person name="Lyne R."/>
            <person name="Stewart A."/>
            <person name="Sgouros J.G."/>
            <person name="Peat N."/>
            <person name="Hayles J."/>
            <person name="Baker S.G."/>
            <person name="Basham D."/>
            <person name="Bowman S."/>
            <person name="Brooks K."/>
            <person name="Brown D."/>
            <person name="Brown S."/>
            <person name="Chillingworth T."/>
            <person name="Churcher C.M."/>
            <person name="Collins M."/>
            <person name="Connor R."/>
            <person name="Cronin A."/>
            <person name="Davis P."/>
            <person name="Feltwell T."/>
            <person name="Fraser A."/>
            <person name="Gentles S."/>
            <person name="Goble A."/>
            <person name="Hamlin N."/>
            <person name="Harris D.E."/>
            <person name="Hidalgo J."/>
            <person name="Hodgson G."/>
            <person name="Holroyd S."/>
            <person name="Hornsby T."/>
            <person name="Howarth S."/>
            <person name="Huckle E.J."/>
            <person name="Hunt S."/>
            <person name="Jagels K."/>
            <person name="James K.D."/>
            <person name="Jones L."/>
            <person name="Jones M."/>
            <person name="Leather S."/>
            <person name="McDonald S."/>
            <person name="McLean J."/>
            <person name="Mooney P."/>
            <person name="Moule S."/>
            <person name="Mungall K.L."/>
            <person name="Murphy L.D."/>
            <person name="Niblett D."/>
            <person name="Odell C."/>
            <person name="Oliver K."/>
            <person name="O'Neil S."/>
            <person name="Pearson D."/>
            <person name="Quail M.A."/>
            <person name="Rabbinowitsch E."/>
            <person name="Rutherford K.M."/>
            <person name="Rutter S."/>
            <person name="Saunders D."/>
            <person name="Seeger K."/>
            <person name="Sharp S."/>
            <person name="Skelton J."/>
            <person name="Simmonds M.N."/>
            <person name="Squares R."/>
            <person name="Squares S."/>
            <person name="Stevens K."/>
            <person name="Taylor K."/>
            <person name="Taylor R.G."/>
            <person name="Tivey A."/>
            <person name="Walsh S.V."/>
            <person name="Warren T."/>
            <person name="Whitehead S."/>
            <person name="Woodward J.R."/>
            <person name="Volckaert G."/>
            <person name="Aert R."/>
            <person name="Robben J."/>
            <person name="Grymonprez B."/>
            <person name="Weltjens I."/>
            <person name="Vanstreels E."/>
            <person name="Rieger M."/>
            <person name="Schaefer M."/>
            <person name="Mueller-Auer S."/>
            <person name="Gabel C."/>
            <person name="Fuchs M."/>
            <person name="Duesterhoeft A."/>
            <person name="Fritzc C."/>
            <person name="Holzer E."/>
            <person name="Moestl D."/>
            <person name="Hilbert H."/>
            <person name="Borzym K."/>
            <person name="Langer I."/>
            <person name="Beck A."/>
            <person name="Lehrach H."/>
            <person name="Reinhardt R."/>
            <person name="Pohl T.M."/>
            <person name="Eger P."/>
            <person name="Zimmermann W."/>
            <person name="Wedler H."/>
            <person name="Wambutt R."/>
            <person name="Purnelle B."/>
            <person name="Goffeau A."/>
            <person name="Cadieu E."/>
            <person name="Dreano S."/>
            <person name="Gloux S."/>
            <person name="Lelaure V."/>
            <person name="Mottier S."/>
            <person name="Galibert F."/>
            <person name="Aves S.J."/>
            <person name="Xiang Z."/>
            <person name="Hunt C."/>
            <person name="Moore K."/>
            <person name="Hurst S.M."/>
            <person name="Lucas M."/>
            <person name="Rochet M."/>
            <person name="Gaillardin C."/>
            <person name="Tallada V.A."/>
            <person name="Garzon A."/>
            <person name="Thode G."/>
            <person name="Daga R.R."/>
            <person name="Cruzado L."/>
            <person name="Jimenez J."/>
            <person name="Sanchez M."/>
            <person name="del Rey F."/>
            <person name="Benito J."/>
            <person name="Dominguez A."/>
            <person name="Revuelta J.L."/>
            <person name="Moreno S."/>
            <person name="Armstrong J."/>
            <person name="Forsburg S.L."/>
            <person name="Cerutti L."/>
            <person name="Lowe T."/>
            <person name="McCombie W.R."/>
            <person name="Paulsen I."/>
            <person name="Potashkin J."/>
            <person name="Shpakovski G.V."/>
            <person name="Ussery D."/>
            <person name="Barrell B.G."/>
            <person name="Nurse P."/>
        </authorList>
    </citation>
    <scope>NUCLEOTIDE SEQUENCE [LARGE SCALE GENOMIC DNA]</scope>
    <source>
        <strain>972 / ATCC 24843</strain>
    </source>
</reference>
<accession>Q9P7U3</accession>
<evidence type="ECO:0000255" key="1"/>
<evidence type="ECO:0000305" key="2"/>
<evidence type="ECO:0000312" key="3">
    <source>
        <dbReference type="EMBL" id="CAB69628.1"/>
    </source>
</evidence>
<gene>
    <name type="ORF">SPAC977.06</name>
</gene>
<comment type="subcellular location">
    <subcellularLocation>
        <location evidence="1">Membrane</location>
        <topology evidence="1">Multi-pass membrane protein</topology>
    </subcellularLocation>
</comment>
<comment type="similarity">
    <text evidence="2">Belongs to the UPF0494 family.</text>
</comment>
<sequence length="189" mass="22190">MVRDTRNVDLERGLELCKPEKVNKQNLFTNIIKPQKDKINIKTDKIKFFLNNLFTEFSKFHDSCYPDGRISTRSKLRWPLLIIWCILIVFAIDKNFEVKDFLSIWINESFINENRFYSEIWGPIAIYICLFVLLLLGLIYCSKIVVKAIPLISIVIAAVVVIIAVAMVKILYICHWLLQNFNFGFRHKS</sequence>
<name>YI76_SCHPO</name>
<protein>
    <recommendedName>
        <fullName>UPF0494 membrane protein C977.06</fullName>
    </recommendedName>
</protein>
<proteinExistence type="inferred from homology"/>
<keyword id="KW-0472">Membrane</keyword>
<keyword id="KW-1185">Reference proteome</keyword>
<keyword id="KW-0812">Transmembrane</keyword>
<keyword id="KW-1133">Transmembrane helix</keyword>